<gene>
    <name type="primary">NOP8</name>
    <name type="ordered locus">YOL144W</name>
</gene>
<protein>
    <recommendedName>
        <fullName>60S ribosome subunit biogenesis protein NOP8</fullName>
    </recommendedName>
    <alternativeName>
        <fullName>Nucleolar protein 8</fullName>
    </alternativeName>
</protein>
<keyword id="KW-0539">Nucleus</keyword>
<keyword id="KW-0597">Phosphoprotein</keyword>
<keyword id="KW-1185">Reference proteome</keyword>
<keyword id="KW-0690">Ribosome biogenesis</keyword>
<keyword id="KW-0694">RNA-binding</keyword>
<proteinExistence type="evidence at protein level"/>
<comment type="function">
    <text evidence="5">Required for 60S ribosomal subunit synthesis. May be involved in assembly reactions occurring within late pre-ribosomal particles.</text>
</comment>
<comment type="subunit">
    <text evidence="4 5">Interacts with NIP7 and RRP43. Together with DBP6, URB1, URB2 and RSA3, forms an RNA-independent complex, which is required during early maturation of nascent 60S ribosomal subunits.</text>
</comment>
<comment type="interaction">
    <interactant intactId="EBI-12135">
        <id>Q08287</id>
    </interactant>
    <interactant intactId="EBI-12067">
        <id>Q08962</id>
        <label>NIP7</label>
    </interactant>
    <organismsDiffer>false</organismsDiffer>
    <experiments>5</experiments>
</comment>
<comment type="interaction">
    <interactant intactId="EBI-12135">
        <id>Q08287</id>
    </interactant>
    <interactant intactId="EBI-26595">
        <id>P34241</id>
        <label>URB1</label>
    </interactant>
    <organismsDiffer>false</organismsDiffer>
    <experiments>4</experiments>
</comment>
<comment type="subcellular location">
    <subcellularLocation>
        <location evidence="5">Nucleus</location>
        <location evidence="5">Nucleolus</location>
    </subcellularLocation>
</comment>
<comment type="miscellaneous">
    <text evidence="3">Present with 2170 molecules/cell in log phase SD medium.</text>
</comment>
<sequence length="484" mass="56966">MDSVIQKRIFVGNIFHNADDCYSELLDRFGKFGDCQDFQFEKHNHFAFIDIRFNDEADFNKLRKSFNNVKFKGNILKVDEAKPNWESTWAVQHAKDLKEDIILNAKMKKKNWQHYKKMENVAKSWKDHKEVIAGRMREAPRKRSQLRNITFRINVNGSLKVYKCYKTKLWGYERNKELNDLVYKFTNNFWKNGYNHIVDRLDYSRAVKTVRFKNGLKQLTVSKDENVCSGEMDSDENMSEEEKEKNNVILNDLLKDFDFDKPMTLNDSDEELLTEQRKGEEEEEEEEEKEVNAPEYENVNKTKDQSTLPQEKPEERKEQDEGDGQEDNEFIPTFTKEIGQGTISNTETLRNLFNPNEAEPVSQFKLIEDSDNDIDHAKDVDVNQLEEEVSKSSDTLGLTSAPVPHVSRDKDNKNFLFFPHLQSPFLVGQTQLSKVRAPGRETMLSNWDEEFWANRGNWTRDMRRKMKDALKHRKRKQSKSGLLL</sequence>
<reference key="1">
    <citation type="journal article" date="1997" name="Nature">
        <title>The nucleotide sequence of Saccharomyces cerevisiae chromosome XV.</title>
        <authorList>
            <person name="Dujon B."/>
            <person name="Albermann K."/>
            <person name="Aldea M."/>
            <person name="Alexandraki D."/>
            <person name="Ansorge W."/>
            <person name="Arino J."/>
            <person name="Benes V."/>
            <person name="Bohn C."/>
            <person name="Bolotin-Fukuhara M."/>
            <person name="Bordonne R."/>
            <person name="Boyer J."/>
            <person name="Camasses A."/>
            <person name="Casamayor A."/>
            <person name="Casas C."/>
            <person name="Cheret G."/>
            <person name="Cziepluch C."/>
            <person name="Daignan-Fornier B."/>
            <person name="Dang V.-D."/>
            <person name="de Haan M."/>
            <person name="Delius H."/>
            <person name="Durand P."/>
            <person name="Fairhead C."/>
            <person name="Feldmann H."/>
            <person name="Gaillon L."/>
            <person name="Galisson F."/>
            <person name="Gamo F.-J."/>
            <person name="Gancedo C."/>
            <person name="Goffeau A."/>
            <person name="Goulding S.E."/>
            <person name="Grivell L.A."/>
            <person name="Habbig B."/>
            <person name="Hand N.J."/>
            <person name="Hani J."/>
            <person name="Hattenhorst U."/>
            <person name="Hebling U."/>
            <person name="Hernando Y."/>
            <person name="Herrero E."/>
            <person name="Heumann K."/>
            <person name="Hiesel R."/>
            <person name="Hilger F."/>
            <person name="Hofmann B."/>
            <person name="Hollenberg C.P."/>
            <person name="Hughes B."/>
            <person name="Jauniaux J.-C."/>
            <person name="Kalogeropoulos A."/>
            <person name="Katsoulou C."/>
            <person name="Kordes E."/>
            <person name="Lafuente M.J."/>
            <person name="Landt O."/>
            <person name="Louis E.J."/>
            <person name="Maarse A.C."/>
            <person name="Madania A."/>
            <person name="Mannhaupt G."/>
            <person name="Marck C."/>
            <person name="Martin R.P."/>
            <person name="Mewes H.-W."/>
            <person name="Michaux G."/>
            <person name="Paces V."/>
            <person name="Parle-McDermott A.G."/>
            <person name="Pearson B.M."/>
            <person name="Perrin A."/>
            <person name="Pettersson B."/>
            <person name="Poch O."/>
            <person name="Pohl T.M."/>
            <person name="Poirey R."/>
            <person name="Portetelle D."/>
            <person name="Pujol A."/>
            <person name="Purnelle B."/>
            <person name="Ramezani Rad M."/>
            <person name="Rechmann S."/>
            <person name="Schwager C."/>
            <person name="Schweizer M."/>
            <person name="Sor F."/>
            <person name="Sterky F."/>
            <person name="Tarassov I.A."/>
            <person name="Teodoru C."/>
            <person name="Tettelin H."/>
            <person name="Thierry A."/>
            <person name="Tobiasch E."/>
            <person name="Tzermia M."/>
            <person name="Uhlen M."/>
            <person name="Unseld M."/>
            <person name="Valens M."/>
            <person name="Vandenbol M."/>
            <person name="Vetter I."/>
            <person name="Vlcek C."/>
            <person name="Voet M."/>
            <person name="Volckaert G."/>
            <person name="Voss H."/>
            <person name="Wambutt R."/>
            <person name="Wedler H."/>
            <person name="Wiemann S."/>
            <person name="Winsor B."/>
            <person name="Wolfe K.H."/>
            <person name="Zollner A."/>
            <person name="Zumstein E."/>
            <person name="Kleine K."/>
        </authorList>
    </citation>
    <scope>NUCLEOTIDE SEQUENCE [LARGE SCALE GENOMIC DNA]</scope>
    <source>
        <strain>ATCC 204508 / S288c</strain>
    </source>
</reference>
<reference key="2">
    <citation type="journal article" date="2014" name="G3 (Bethesda)">
        <title>The reference genome sequence of Saccharomyces cerevisiae: Then and now.</title>
        <authorList>
            <person name="Engel S.R."/>
            <person name="Dietrich F.S."/>
            <person name="Fisk D.G."/>
            <person name="Binkley G."/>
            <person name="Balakrishnan R."/>
            <person name="Costanzo M.C."/>
            <person name="Dwight S.S."/>
            <person name="Hitz B.C."/>
            <person name="Karra K."/>
            <person name="Nash R.S."/>
            <person name="Weng S."/>
            <person name="Wong E.D."/>
            <person name="Lloyd P."/>
            <person name="Skrzypek M.S."/>
            <person name="Miyasato S.R."/>
            <person name="Simison M."/>
            <person name="Cherry J.M."/>
        </authorList>
    </citation>
    <scope>GENOME REANNOTATION</scope>
    <source>
        <strain>ATCC 204508 / S288c</strain>
    </source>
</reference>
<reference key="3">
    <citation type="journal article" date="1999" name="Mol. Cell. Biol.">
        <title>Nip7p interacts with Nop8p, an essential nucleolar protein required for 60S ribosome biogenesis, and the exosome subunit Rrp43p.</title>
        <authorList>
            <person name="Zanchin N.I.T."/>
            <person name="Goldfarb D.S."/>
        </authorList>
    </citation>
    <scope>FUNCTION</scope>
    <scope>INTERACTION WITH NIP7 AND RRP43</scope>
    <scope>SUBCELLULAR LOCATION</scope>
</reference>
<reference key="4">
    <citation type="journal article" date="2003" name="Nature">
        <title>Global analysis of protein expression in yeast.</title>
        <authorList>
            <person name="Ghaemmaghami S."/>
            <person name="Huh W.-K."/>
            <person name="Bower K."/>
            <person name="Howson R.W."/>
            <person name="Belle A."/>
            <person name="Dephoure N."/>
            <person name="O'Shea E.K."/>
            <person name="Weissman J.S."/>
        </authorList>
    </citation>
    <scope>LEVEL OF PROTEIN EXPRESSION [LARGE SCALE ANALYSIS]</scope>
</reference>
<reference key="5">
    <citation type="journal article" date="2007" name="J. Proteome Res.">
        <title>Large-scale phosphorylation analysis of alpha-factor-arrested Saccharomyces cerevisiae.</title>
        <authorList>
            <person name="Li X."/>
            <person name="Gerber S.A."/>
            <person name="Rudner A.D."/>
            <person name="Beausoleil S.A."/>
            <person name="Haas W."/>
            <person name="Villen J."/>
            <person name="Elias J.E."/>
            <person name="Gygi S.P."/>
        </authorList>
    </citation>
    <scope>PHOSPHORYLATION [LARGE SCALE ANALYSIS] AT SER-268 AND SER-370</scope>
    <scope>IDENTIFICATION BY MASS SPECTROMETRY [LARGE SCALE ANALYSIS]</scope>
    <source>
        <strain>ADR376</strain>
    </source>
</reference>
<reference key="6">
    <citation type="journal article" date="2007" name="Mol. Cell. Biol.">
        <title>Characterization of Saccharomyces cerevisiae Npa2p (Urb2p) reveals a Low-molecular-mass complex containing Dbp6p, Npa1p (Urb1p), Nop8p, and Rsa3p involved in early steps of 60S ribosomal subunit biogenesis.</title>
        <authorList>
            <person name="Rosado I.V."/>
            <person name="Dez C."/>
            <person name="Lebaron S."/>
            <person name="Caizergues-Ferrer M."/>
            <person name="Henry Y."/>
            <person name="de la Cruz J."/>
        </authorList>
    </citation>
    <scope>IDENTIFICATION IN A COMPLEX WITH DBP6; RSA3; URB1 AND URB2</scope>
</reference>
<reference key="7">
    <citation type="journal article" date="2007" name="Proc. Natl. Acad. Sci. U.S.A.">
        <title>Analysis of phosphorylation sites on proteins from Saccharomyces cerevisiae by electron transfer dissociation (ETD) mass spectrometry.</title>
        <authorList>
            <person name="Chi A."/>
            <person name="Huttenhower C."/>
            <person name="Geer L.Y."/>
            <person name="Coon J.J."/>
            <person name="Syka J.E.P."/>
            <person name="Bai D.L."/>
            <person name="Shabanowitz J."/>
            <person name="Burke D.J."/>
            <person name="Troyanskaya O.G."/>
            <person name="Hunt D.F."/>
        </authorList>
    </citation>
    <scope>PHOSPHORYLATION [LARGE SCALE ANALYSIS] AT SER-370</scope>
    <scope>IDENTIFICATION BY MASS SPECTROMETRY [LARGE SCALE ANALYSIS]</scope>
</reference>
<reference key="8">
    <citation type="journal article" date="2008" name="Mol. Cell. Proteomics">
        <title>A multidimensional chromatography technology for in-depth phosphoproteome analysis.</title>
        <authorList>
            <person name="Albuquerque C.P."/>
            <person name="Smolka M.B."/>
            <person name="Payne S.H."/>
            <person name="Bafna V."/>
            <person name="Eng J."/>
            <person name="Zhou H."/>
        </authorList>
    </citation>
    <scope>PHOSPHORYLATION [LARGE SCALE ANALYSIS] AT SER-268 AND SER-370</scope>
    <scope>IDENTIFICATION BY MASS SPECTROMETRY [LARGE SCALE ANALYSIS]</scope>
</reference>
<reference key="9">
    <citation type="journal article" date="2009" name="Science">
        <title>Global analysis of Cdk1 substrate phosphorylation sites provides insights into evolution.</title>
        <authorList>
            <person name="Holt L.J."/>
            <person name="Tuch B.B."/>
            <person name="Villen J."/>
            <person name="Johnson A.D."/>
            <person name="Gygi S.P."/>
            <person name="Morgan D.O."/>
        </authorList>
    </citation>
    <scope>PHOSPHORYLATION [LARGE SCALE ANALYSIS] AT SER-234; SER-239; SER-268 AND SER-370</scope>
    <scope>IDENTIFICATION BY MASS SPECTROMETRY [LARGE SCALE ANALYSIS]</scope>
</reference>
<reference key="10">
    <citation type="journal article" date="2012" name="Proc. Natl. Acad. Sci. U.S.A.">
        <title>N-terminal acetylome analyses and functional insights of the N-terminal acetyltransferase NatB.</title>
        <authorList>
            <person name="Van Damme P."/>
            <person name="Lasa M."/>
            <person name="Polevoda B."/>
            <person name="Gazquez C."/>
            <person name="Elosegui-Artola A."/>
            <person name="Kim D.S."/>
            <person name="De Juan-Pardo E."/>
            <person name="Demeyer K."/>
            <person name="Hole K."/>
            <person name="Larrea E."/>
            <person name="Timmerman E."/>
            <person name="Prieto J."/>
            <person name="Arnesen T."/>
            <person name="Sherman F."/>
            <person name="Gevaert K."/>
            <person name="Aldabe R."/>
        </authorList>
    </citation>
    <scope>IDENTIFICATION BY MASS SPECTROMETRY [LARGE SCALE ANALYSIS]</scope>
</reference>
<accession>Q08287</accession>
<accession>D6W1S5</accession>
<name>NOP8_YEAST</name>
<organism>
    <name type="scientific">Saccharomyces cerevisiae (strain ATCC 204508 / S288c)</name>
    <name type="common">Baker's yeast</name>
    <dbReference type="NCBI Taxonomy" id="559292"/>
    <lineage>
        <taxon>Eukaryota</taxon>
        <taxon>Fungi</taxon>
        <taxon>Dikarya</taxon>
        <taxon>Ascomycota</taxon>
        <taxon>Saccharomycotina</taxon>
        <taxon>Saccharomycetes</taxon>
        <taxon>Saccharomycetales</taxon>
        <taxon>Saccharomycetaceae</taxon>
        <taxon>Saccharomyces</taxon>
    </lineage>
</organism>
<feature type="chain" id="PRO_0000081678" description="60S ribosome subunit biogenesis protein NOP8">
    <location>
        <begin position="1"/>
        <end position="484"/>
    </location>
</feature>
<feature type="domain" description="RRM" evidence="1">
    <location>
        <begin position="7"/>
        <end position="83"/>
    </location>
</feature>
<feature type="region of interest" description="Disordered" evidence="2">
    <location>
        <begin position="260"/>
        <end position="330"/>
    </location>
</feature>
<feature type="compositionally biased region" description="Acidic residues" evidence="2">
    <location>
        <begin position="320"/>
        <end position="329"/>
    </location>
</feature>
<feature type="modified residue" description="Phosphoserine" evidence="9">
    <location>
        <position position="234"/>
    </location>
</feature>
<feature type="modified residue" description="Phosphoserine" evidence="9">
    <location>
        <position position="239"/>
    </location>
</feature>
<feature type="modified residue" description="Phosphoserine" evidence="7 8 9">
    <location>
        <position position="268"/>
    </location>
</feature>
<feature type="modified residue" description="Phosphoserine" evidence="6 7 8 9">
    <location>
        <position position="370"/>
    </location>
</feature>
<dbReference type="EMBL" id="Z74886">
    <property type="protein sequence ID" value="CAA99165.1"/>
    <property type="molecule type" value="Genomic_DNA"/>
</dbReference>
<dbReference type="EMBL" id="BK006948">
    <property type="protein sequence ID" value="DAA10641.1"/>
    <property type="molecule type" value="Genomic_DNA"/>
</dbReference>
<dbReference type="PIR" id="S61870">
    <property type="entry name" value="S61870"/>
</dbReference>
<dbReference type="RefSeq" id="NP_014497.1">
    <property type="nucleotide sequence ID" value="NM_001183398.1"/>
</dbReference>
<dbReference type="SMR" id="Q08287"/>
<dbReference type="BioGRID" id="34273">
    <property type="interactions" value="189"/>
</dbReference>
<dbReference type="ComplexPortal" id="CPX-1421">
    <property type="entry name" value="NOP8 60s ribosome pre-assembly complex"/>
</dbReference>
<dbReference type="DIP" id="DIP-4206N"/>
<dbReference type="FunCoup" id="Q08287">
    <property type="interactions" value="214"/>
</dbReference>
<dbReference type="IntAct" id="Q08287">
    <property type="interactions" value="12"/>
</dbReference>
<dbReference type="MINT" id="Q08287"/>
<dbReference type="STRING" id="4932.YOL144W"/>
<dbReference type="iPTMnet" id="Q08287"/>
<dbReference type="PaxDb" id="4932-YOL144W"/>
<dbReference type="PeptideAtlas" id="Q08287"/>
<dbReference type="EnsemblFungi" id="YOL144W_mRNA">
    <property type="protein sequence ID" value="YOL144W"/>
    <property type="gene ID" value="YOL144W"/>
</dbReference>
<dbReference type="GeneID" id="854021"/>
<dbReference type="KEGG" id="sce:YOL144W"/>
<dbReference type="AGR" id="SGD:S000005504"/>
<dbReference type="SGD" id="S000005504">
    <property type="gene designation" value="NOP8"/>
</dbReference>
<dbReference type="VEuPathDB" id="FungiDB:YOL144W"/>
<dbReference type="eggNOG" id="ENOG502QQ4K">
    <property type="taxonomic scope" value="Eukaryota"/>
</dbReference>
<dbReference type="HOGENOM" id="CLU_020873_1_0_1"/>
<dbReference type="InParanoid" id="Q08287"/>
<dbReference type="OMA" id="TKLWGYE"/>
<dbReference type="OrthoDB" id="21643at2759"/>
<dbReference type="BioCyc" id="YEAST:G3O-33534-MONOMER"/>
<dbReference type="BioGRID-ORCS" id="854021">
    <property type="hits" value="0 hits in 10 CRISPR screens"/>
</dbReference>
<dbReference type="PRO" id="PR:Q08287"/>
<dbReference type="Proteomes" id="UP000002311">
    <property type="component" value="Chromosome XV"/>
</dbReference>
<dbReference type="RNAct" id="Q08287">
    <property type="molecule type" value="protein"/>
</dbReference>
<dbReference type="GO" id="GO:0005730">
    <property type="term" value="C:nucleolus"/>
    <property type="evidence" value="ECO:0000314"/>
    <property type="project" value="SGD"/>
</dbReference>
<dbReference type="GO" id="GO:0005634">
    <property type="term" value="C:nucleus"/>
    <property type="evidence" value="ECO:0000303"/>
    <property type="project" value="ComplexPortal"/>
</dbReference>
<dbReference type="GO" id="GO:0008428">
    <property type="term" value="F:ribonuclease inhibitor activity"/>
    <property type="evidence" value="ECO:0000314"/>
    <property type="project" value="SGD"/>
</dbReference>
<dbReference type="GO" id="GO:0003723">
    <property type="term" value="F:RNA binding"/>
    <property type="evidence" value="ECO:0007669"/>
    <property type="project" value="UniProtKB-KW"/>
</dbReference>
<dbReference type="GO" id="GO:0000463">
    <property type="term" value="P:maturation of LSU-rRNA from tricistronic rRNA transcript (SSU-rRNA, 5.8S rRNA, LSU-rRNA)"/>
    <property type="evidence" value="ECO:0000315"/>
    <property type="project" value="SGD"/>
</dbReference>
<dbReference type="GO" id="GO:0042273">
    <property type="term" value="P:ribosomal large subunit biogenesis"/>
    <property type="evidence" value="ECO:0000315"/>
    <property type="project" value="SGD"/>
</dbReference>
<dbReference type="CDD" id="cd12226">
    <property type="entry name" value="RRM_NOL8"/>
    <property type="match status" value="1"/>
</dbReference>
<dbReference type="Gene3D" id="3.30.70.330">
    <property type="match status" value="1"/>
</dbReference>
<dbReference type="InterPro" id="IPR034138">
    <property type="entry name" value="NOP8_RRM"/>
</dbReference>
<dbReference type="InterPro" id="IPR012677">
    <property type="entry name" value="Nucleotide-bd_a/b_plait_sf"/>
</dbReference>
<dbReference type="InterPro" id="IPR035979">
    <property type="entry name" value="RBD_domain_sf"/>
</dbReference>
<dbReference type="InterPro" id="IPR000504">
    <property type="entry name" value="RRM_dom"/>
</dbReference>
<dbReference type="SUPFAM" id="SSF54928">
    <property type="entry name" value="RNA-binding domain, RBD"/>
    <property type="match status" value="1"/>
</dbReference>
<dbReference type="PROSITE" id="PS50102">
    <property type="entry name" value="RRM"/>
    <property type="match status" value="1"/>
</dbReference>
<evidence type="ECO:0000255" key="1">
    <source>
        <dbReference type="PROSITE-ProRule" id="PRU00176"/>
    </source>
</evidence>
<evidence type="ECO:0000256" key="2">
    <source>
        <dbReference type="SAM" id="MobiDB-lite"/>
    </source>
</evidence>
<evidence type="ECO:0000269" key="3">
    <source>
    </source>
</evidence>
<evidence type="ECO:0000269" key="4">
    <source>
    </source>
</evidence>
<evidence type="ECO:0000269" key="5">
    <source>
    </source>
</evidence>
<evidence type="ECO:0007744" key="6">
    <source>
    </source>
</evidence>
<evidence type="ECO:0007744" key="7">
    <source>
    </source>
</evidence>
<evidence type="ECO:0007744" key="8">
    <source>
    </source>
</evidence>
<evidence type="ECO:0007744" key="9">
    <source>
    </source>
</evidence>